<organism>
    <name type="scientific">Schistosoma mansoni</name>
    <name type="common">Blood fluke</name>
    <dbReference type="NCBI Taxonomy" id="6183"/>
    <lineage>
        <taxon>Eukaryota</taxon>
        <taxon>Metazoa</taxon>
        <taxon>Spiralia</taxon>
        <taxon>Lophotrochozoa</taxon>
        <taxon>Platyhelminthes</taxon>
        <taxon>Trematoda</taxon>
        <taxon>Digenea</taxon>
        <taxon>Strigeidida</taxon>
        <taxon>Schistosomatoidea</taxon>
        <taxon>Schistosomatidae</taxon>
        <taxon>Schistosoma</taxon>
    </lineage>
</organism>
<sequence length="197" mass="22344">MTDQKLAKAKVIFVLGGPGSGKGTQCEKLVQKFHFNHLSSGDLLRAEVQSGSPKGKELKAMMERGELVPLEVVLALLKEAMINWLTKIVISLSIRYPRELDQGIKFEKEVCPCLCVINFDVSEEVMRKRLLKRAETSNRVDDNEETIVKRFRTFNELTKPVIEHYKQQNKVITIDASGTVDAIFDKVNHELQKFGVK</sequence>
<feature type="chain" id="PRO_0000158937" description="Adenylate kinase">
    <location>
        <begin position="1"/>
        <end position="197"/>
    </location>
</feature>
<feature type="region of interest" description="NMP" evidence="1">
    <location>
        <begin position="39"/>
        <end position="68"/>
    </location>
</feature>
<feature type="region of interest" description="LID" evidence="1">
    <location>
        <begin position="132"/>
        <end position="142"/>
    </location>
</feature>
<feature type="binding site" evidence="1">
    <location>
        <begin position="19"/>
        <end position="24"/>
    </location>
    <ligand>
        <name>ATP</name>
        <dbReference type="ChEBI" id="CHEBI:30616"/>
    </ligand>
</feature>
<feature type="binding site" evidence="1">
    <location>
        <position position="40"/>
    </location>
    <ligand>
        <name>AMP</name>
        <dbReference type="ChEBI" id="CHEBI:456215"/>
    </ligand>
</feature>
<feature type="binding site" evidence="1">
    <location>
        <position position="45"/>
    </location>
    <ligand>
        <name>AMP</name>
        <dbReference type="ChEBI" id="CHEBI:456215"/>
    </ligand>
</feature>
<feature type="binding site" evidence="1">
    <location>
        <begin position="66"/>
        <end position="68"/>
    </location>
    <ligand>
        <name>AMP</name>
        <dbReference type="ChEBI" id="CHEBI:456215"/>
    </ligand>
</feature>
<feature type="binding site" evidence="1">
    <location>
        <begin position="95"/>
        <end position="98"/>
    </location>
    <ligand>
        <name>AMP</name>
        <dbReference type="ChEBI" id="CHEBI:456215"/>
    </ligand>
</feature>
<feature type="binding site" evidence="1">
    <location>
        <position position="102"/>
    </location>
    <ligand>
        <name>AMP</name>
        <dbReference type="ChEBI" id="CHEBI:456215"/>
    </ligand>
</feature>
<feature type="binding site" evidence="1">
    <location>
        <position position="133"/>
    </location>
    <ligand>
        <name>ATP</name>
        <dbReference type="ChEBI" id="CHEBI:30616"/>
    </ligand>
</feature>
<feature type="binding site" evidence="1">
    <location>
        <position position="139"/>
    </location>
    <ligand>
        <name>AMP</name>
        <dbReference type="ChEBI" id="CHEBI:456215"/>
    </ligand>
</feature>
<feature type="binding site" evidence="1">
    <location>
        <position position="150"/>
    </location>
    <ligand>
        <name>AMP</name>
        <dbReference type="ChEBI" id="CHEBI:456215"/>
    </ligand>
</feature>
<feature type="binding site" evidence="1">
    <location>
        <position position="178"/>
    </location>
    <ligand>
        <name>ATP</name>
        <dbReference type="ChEBI" id="CHEBI:30616"/>
    </ligand>
</feature>
<dbReference type="EC" id="2.7.4.3"/>
<dbReference type="EMBL" id="M80542">
    <property type="protein sequence ID" value="AAA29907.1"/>
    <property type="molecule type" value="mRNA"/>
</dbReference>
<dbReference type="SMR" id="P25824"/>
<dbReference type="FunCoup" id="P25824">
    <property type="interactions" value="261"/>
</dbReference>
<dbReference type="STRING" id="6183.P25824"/>
<dbReference type="eggNOG" id="KOG3079">
    <property type="taxonomic scope" value="Eukaryota"/>
</dbReference>
<dbReference type="HOGENOM" id="CLU_032354_0_3_1"/>
<dbReference type="InParanoid" id="P25824"/>
<dbReference type="BRENDA" id="2.7.4.3">
    <property type="organism ID" value="5608"/>
</dbReference>
<dbReference type="Proteomes" id="UP000008854">
    <property type="component" value="Unassembled WGS sequence"/>
</dbReference>
<dbReference type="GO" id="GO:0005737">
    <property type="term" value="C:cytoplasm"/>
    <property type="evidence" value="ECO:0007669"/>
    <property type="project" value="UniProtKB-SubCell"/>
</dbReference>
<dbReference type="GO" id="GO:0004017">
    <property type="term" value="F:adenylate kinase activity"/>
    <property type="evidence" value="ECO:0007669"/>
    <property type="project" value="UniProtKB-EC"/>
</dbReference>
<dbReference type="GO" id="GO:0005524">
    <property type="term" value="F:ATP binding"/>
    <property type="evidence" value="ECO:0007669"/>
    <property type="project" value="UniProtKB-KW"/>
</dbReference>
<dbReference type="CDD" id="cd01428">
    <property type="entry name" value="ADK"/>
    <property type="match status" value="1"/>
</dbReference>
<dbReference type="FunFam" id="3.40.50.300:FF:000315">
    <property type="entry name" value="Adenylate kinase 1"/>
    <property type="match status" value="1"/>
</dbReference>
<dbReference type="Gene3D" id="3.40.50.300">
    <property type="entry name" value="P-loop containing nucleotide triphosphate hydrolases"/>
    <property type="match status" value="1"/>
</dbReference>
<dbReference type="HAMAP" id="MF_00235">
    <property type="entry name" value="Adenylate_kinase_Adk"/>
    <property type="match status" value="1"/>
</dbReference>
<dbReference type="InterPro" id="IPR000850">
    <property type="entry name" value="Adenylat/UMP-CMP_kin"/>
</dbReference>
<dbReference type="InterPro" id="IPR027417">
    <property type="entry name" value="P-loop_NTPase"/>
</dbReference>
<dbReference type="PANTHER" id="PTHR23359">
    <property type="entry name" value="NUCLEOTIDE KINASE"/>
    <property type="match status" value="1"/>
</dbReference>
<dbReference type="Pfam" id="PF00406">
    <property type="entry name" value="ADK"/>
    <property type="match status" value="1"/>
</dbReference>
<dbReference type="PRINTS" id="PR00094">
    <property type="entry name" value="ADENYLTKNASE"/>
</dbReference>
<dbReference type="SUPFAM" id="SSF52540">
    <property type="entry name" value="P-loop containing nucleoside triphosphate hydrolases"/>
    <property type="match status" value="1"/>
</dbReference>
<comment type="function">
    <text evidence="1">Catalyzes the reversible transfer of the terminal phosphate group between ATP and AMP. Plays an important role in cellular energy homeostasis and in adenine nucleotide metabolism.</text>
</comment>
<comment type="catalytic activity">
    <reaction evidence="1">
        <text>AMP + ATP = 2 ADP</text>
        <dbReference type="Rhea" id="RHEA:12973"/>
        <dbReference type="ChEBI" id="CHEBI:30616"/>
        <dbReference type="ChEBI" id="CHEBI:456215"/>
        <dbReference type="ChEBI" id="CHEBI:456216"/>
        <dbReference type="EC" id="2.7.4.3"/>
    </reaction>
</comment>
<comment type="subunit">
    <text evidence="1">Monomer.</text>
</comment>
<comment type="subcellular location">
    <subcellularLocation>
        <location evidence="1">Cytoplasm</location>
    </subcellularLocation>
</comment>
<comment type="similarity">
    <text evidence="2">Belongs to the adenylate kinase family.</text>
</comment>
<proteinExistence type="evidence at transcript level"/>
<name>KAD_SCHMA</name>
<protein>
    <recommendedName>
        <fullName>Adenylate kinase</fullName>
        <shortName>AK</shortName>
        <ecNumber>2.7.4.3</ecNumber>
    </recommendedName>
    <alternativeName>
        <fullName>ATP-AMP transphosphorylase</fullName>
    </alternativeName>
    <alternativeName>
        <fullName>ATP:AMP phosphotransferase</fullName>
    </alternativeName>
    <alternativeName>
        <fullName>Adenylate monophosphate kinase</fullName>
    </alternativeName>
</protein>
<reference key="1">
    <citation type="journal article" date="1992" name="Exp. Parasitol.">
        <title>Schistosoma mansoni: cloning and sequencing of a gene for adenylate kinase.</title>
        <authorList>
            <person name="Cao M."/>
            <person name="Akridge R."/>
            <person name="Weston D."/>
            <person name="Kemp W.M."/>
            <person name="Doughty B.L."/>
        </authorList>
    </citation>
    <scope>NUCLEOTIDE SEQUENCE [MRNA]</scope>
    <source>
        <tissue>Egg</tissue>
    </source>
</reference>
<keyword id="KW-0067">ATP-binding</keyword>
<keyword id="KW-0963">Cytoplasm</keyword>
<keyword id="KW-0418">Kinase</keyword>
<keyword id="KW-0547">Nucleotide-binding</keyword>
<keyword id="KW-1185">Reference proteome</keyword>
<keyword id="KW-0808">Transferase</keyword>
<accession>P25824</accession>
<evidence type="ECO:0000250" key="1">
    <source>
        <dbReference type="UniProtKB" id="P69441"/>
    </source>
</evidence>
<evidence type="ECO:0000305" key="2"/>